<name>MGT_STAAT</name>
<reference key="1">
    <citation type="journal article" date="2007" name="BMC Microbiol.">
        <title>Subtle genetic changes enhance virulence of methicillin resistant and sensitive Staphylococcus aureus.</title>
        <authorList>
            <person name="Highlander S.K."/>
            <person name="Hulten K.G."/>
            <person name="Qin X."/>
            <person name="Jiang H."/>
            <person name="Yerrapragada S."/>
            <person name="Mason E.O. Jr."/>
            <person name="Shang Y."/>
            <person name="Williams T.M."/>
            <person name="Fortunov R.M."/>
            <person name="Liu Y."/>
            <person name="Igboeli O."/>
            <person name="Petrosino J."/>
            <person name="Tirumalai M."/>
            <person name="Uzman A."/>
            <person name="Fox G.E."/>
            <person name="Cardenas A.M."/>
            <person name="Muzny D.M."/>
            <person name="Hemphill L."/>
            <person name="Ding Y."/>
            <person name="Dugan S."/>
            <person name="Blyth P.R."/>
            <person name="Buhay C.J."/>
            <person name="Dinh H.H."/>
            <person name="Hawes A.C."/>
            <person name="Holder M."/>
            <person name="Kovar C.L."/>
            <person name="Lee S.L."/>
            <person name="Liu W."/>
            <person name="Nazareth L.V."/>
            <person name="Wang Q."/>
            <person name="Zhou J."/>
            <person name="Kaplan S.L."/>
            <person name="Weinstock G.M."/>
        </authorList>
    </citation>
    <scope>NUCLEOTIDE SEQUENCE [LARGE SCALE GENOMIC DNA]</scope>
    <source>
        <strain>USA300 / TCH1516</strain>
    </source>
</reference>
<protein>
    <recommendedName>
        <fullName evidence="1">Monofunctional glycosyltransferase</fullName>
        <shortName evidence="1">MGT</shortName>
        <ecNumber evidence="1">2.4.99.28</ecNumber>
    </recommendedName>
    <alternativeName>
        <fullName evidence="1">Peptidoglycan TGase</fullName>
    </alternativeName>
</protein>
<dbReference type="EC" id="2.4.99.28" evidence="1"/>
<dbReference type="EMBL" id="CP000730">
    <property type="protein sequence ID" value="ABX29872.1"/>
    <property type="molecule type" value="Genomic_DNA"/>
</dbReference>
<dbReference type="SMR" id="A8YY46"/>
<dbReference type="CAZy" id="GT51">
    <property type="family name" value="Glycosyltransferase Family 51"/>
</dbReference>
<dbReference type="KEGG" id="sax:USA300HOU_1869"/>
<dbReference type="HOGENOM" id="CLU_006354_1_2_9"/>
<dbReference type="UniPathway" id="UPA00219"/>
<dbReference type="GO" id="GO:0030288">
    <property type="term" value="C:outer membrane-bounded periplasmic space"/>
    <property type="evidence" value="ECO:0007669"/>
    <property type="project" value="TreeGrafter"/>
</dbReference>
<dbReference type="GO" id="GO:0005886">
    <property type="term" value="C:plasma membrane"/>
    <property type="evidence" value="ECO:0007669"/>
    <property type="project" value="UniProtKB-SubCell"/>
</dbReference>
<dbReference type="GO" id="GO:0008955">
    <property type="term" value="F:peptidoglycan glycosyltransferase activity"/>
    <property type="evidence" value="ECO:0007669"/>
    <property type="project" value="UniProtKB-UniRule"/>
</dbReference>
<dbReference type="GO" id="GO:0071555">
    <property type="term" value="P:cell wall organization"/>
    <property type="evidence" value="ECO:0007669"/>
    <property type="project" value="UniProtKB-KW"/>
</dbReference>
<dbReference type="GO" id="GO:0009252">
    <property type="term" value="P:peptidoglycan biosynthetic process"/>
    <property type="evidence" value="ECO:0007669"/>
    <property type="project" value="UniProtKB-UniRule"/>
</dbReference>
<dbReference type="GO" id="GO:0008360">
    <property type="term" value="P:regulation of cell shape"/>
    <property type="evidence" value="ECO:0007669"/>
    <property type="project" value="UniProtKB-KW"/>
</dbReference>
<dbReference type="Gene3D" id="1.10.3810.10">
    <property type="entry name" value="Biosynthetic peptidoglycan transglycosylase-like"/>
    <property type="match status" value="1"/>
</dbReference>
<dbReference type="HAMAP" id="MF_01434">
    <property type="entry name" value="MGT"/>
    <property type="match status" value="1"/>
</dbReference>
<dbReference type="InterPro" id="IPR001264">
    <property type="entry name" value="Glyco_trans_51"/>
</dbReference>
<dbReference type="InterPro" id="IPR050396">
    <property type="entry name" value="Glycosyltr_51/Transpeptidase"/>
</dbReference>
<dbReference type="InterPro" id="IPR023346">
    <property type="entry name" value="Lysozyme-like_dom_sf"/>
</dbReference>
<dbReference type="InterPro" id="IPR022978">
    <property type="entry name" value="Monofunct_glyco_trans"/>
</dbReference>
<dbReference type="InterPro" id="IPR036950">
    <property type="entry name" value="PBP_transglycosylase"/>
</dbReference>
<dbReference type="NCBIfam" id="NF010008">
    <property type="entry name" value="PRK13481.1"/>
    <property type="match status" value="1"/>
</dbReference>
<dbReference type="PANTHER" id="PTHR32282">
    <property type="entry name" value="BINDING PROTEIN TRANSPEPTIDASE, PUTATIVE-RELATED"/>
    <property type="match status" value="1"/>
</dbReference>
<dbReference type="PANTHER" id="PTHR32282:SF11">
    <property type="entry name" value="PENICILLIN-BINDING PROTEIN 1B"/>
    <property type="match status" value="1"/>
</dbReference>
<dbReference type="Pfam" id="PF00912">
    <property type="entry name" value="Transgly"/>
    <property type="match status" value="1"/>
</dbReference>
<dbReference type="SUPFAM" id="SSF53955">
    <property type="entry name" value="Lysozyme-like"/>
    <property type="match status" value="1"/>
</dbReference>
<keyword id="KW-1003">Cell membrane</keyword>
<keyword id="KW-0133">Cell shape</keyword>
<keyword id="KW-0961">Cell wall biogenesis/degradation</keyword>
<keyword id="KW-0328">Glycosyltransferase</keyword>
<keyword id="KW-0472">Membrane</keyword>
<keyword id="KW-0573">Peptidoglycan synthesis</keyword>
<keyword id="KW-0808">Transferase</keyword>
<keyword id="KW-0812">Transmembrane</keyword>
<keyword id="KW-1133">Transmembrane helix</keyword>
<gene>
    <name evidence="1" type="primary">mgt</name>
    <name type="ordered locus">USA300HOU_1869</name>
</gene>
<accession>A8YY46</accession>
<proteinExistence type="inferred from homology"/>
<sequence>MKRSDRYSNSNEHFEHMKHEPHYNTYYQPVGKPPKKKKSKRILLKILLTILIIIALFIGIMYFLSTRDNVDELRKIENKSSFVSADNMPEYVKGAFISMEDERFYNHHGFDLKGTTRALFSTISDRDVQGGSTITQQVVKNYFYDNDRSFTRKVKELFVAHRVEKQYNKNEILSFYLNNIYFGDNQYTLEGAANHYFGTTVNKNSTTMSHITVLQSAILASKVNAPSVYNINNMSENFTQRVSTNLEKMKQQNYINETQYQQAMSQLNR</sequence>
<evidence type="ECO:0000255" key="1">
    <source>
        <dbReference type="HAMAP-Rule" id="MF_01434"/>
    </source>
</evidence>
<comment type="function">
    <text evidence="1">Peptidoglycan polymerase that catalyzes glycan chain elongation using lipid-linked disaccharide-pentapeptide as the substrate.</text>
</comment>
<comment type="catalytic activity">
    <reaction evidence="1">
        <text>[GlcNAc-(1-&gt;4)-Mur2Ac(oyl-L-Ala-gamma-D-Glu-L-Lys-D-Ala-D-Ala)](n)-di-trans,octa-cis-undecaprenyl diphosphate + beta-D-GlcNAc-(1-&gt;4)-Mur2Ac(oyl-L-Ala-gamma-D-Glu-L-Lys-D-Ala-D-Ala)-di-trans,octa-cis-undecaprenyl diphosphate = [GlcNAc-(1-&gt;4)-Mur2Ac(oyl-L-Ala-gamma-D-Glu-L-Lys-D-Ala-D-Ala)](n+1)-di-trans,octa-cis-undecaprenyl diphosphate + di-trans,octa-cis-undecaprenyl diphosphate + H(+)</text>
        <dbReference type="Rhea" id="RHEA:23708"/>
        <dbReference type="Rhea" id="RHEA-COMP:9602"/>
        <dbReference type="Rhea" id="RHEA-COMP:9603"/>
        <dbReference type="ChEBI" id="CHEBI:15378"/>
        <dbReference type="ChEBI" id="CHEBI:58405"/>
        <dbReference type="ChEBI" id="CHEBI:60033"/>
        <dbReference type="ChEBI" id="CHEBI:78435"/>
        <dbReference type="EC" id="2.4.99.28"/>
    </reaction>
</comment>
<comment type="pathway">
    <text evidence="1">Cell wall biogenesis; peptidoglycan biosynthesis.</text>
</comment>
<comment type="subcellular location">
    <subcellularLocation>
        <location evidence="1">Cell membrane</location>
        <topology evidence="1">Single-pass membrane protein</topology>
    </subcellularLocation>
</comment>
<comment type="similarity">
    <text evidence="1">Belongs to the glycosyltransferase 51 family.</text>
</comment>
<feature type="chain" id="PRO_1000087441" description="Monofunctional glycosyltransferase">
    <location>
        <begin position="1"/>
        <end position="269"/>
    </location>
</feature>
<feature type="transmembrane region" description="Helical" evidence="1">
    <location>
        <begin position="46"/>
        <end position="66"/>
    </location>
</feature>
<organism>
    <name type="scientific">Staphylococcus aureus (strain USA300 / TCH1516)</name>
    <dbReference type="NCBI Taxonomy" id="451516"/>
    <lineage>
        <taxon>Bacteria</taxon>
        <taxon>Bacillati</taxon>
        <taxon>Bacillota</taxon>
        <taxon>Bacilli</taxon>
        <taxon>Bacillales</taxon>
        <taxon>Staphylococcaceae</taxon>
        <taxon>Staphylococcus</taxon>
    </lineage>
</organism>